<reference key="1">
    <citation type="journal article" date="1998" name="DNA Res.">
        <title>Complete sequence and gene organization of the genome of a hyper-thermophilic archaebacterium, Pyrococcus horikoshii OT3.</title>
        <authorList>
            <person name="Kawarabayasi Y."/>
            <person name="Sawada M."/>
            <person name="Horikawa H."/>
            <person name="Haikawa Y."/>
            <person name="Hino Y."/>
            <person name="Yamamoto S."/>
            <person name="Sekine M."/>
            <person name="Baba S."/>
            <person name="Kosugi H."/>
            <person name="Hosoyama A."/>
            <person name="Nagai Y."/>
            <person name="Sakai M."/>
            <person name="Ogura K."/>
            <person name="Otsuka R."/>
            <person name="Nakazawa H."/>
            <person name="Takamiya M."/>
            <person name="Ohfuku Y."/>
            <person name="Funahashi T."/>
            <person name="Tanaka T."/>
            <person name="Kudoh Y."/>
            <person name="Yamazaki J."/>
            <person name="Kushida N."/>
            <person name="Oguchi A."/>
            <person name="Aoki K."/>
            <person name="Yoshizawa T."/>
            <person name="Nakamura Y."/>
            <person name="Robb F.T."/>
            <person name="Horikoshi K."/>
            <person name="Masuchi Y."/>
            <person name="Shizuya H."/>
            <person name="Kikuchi H."/>
        </authorList>
    </citation>
    <scope>NUCLEOTIDE SEQUENCE [LARGE SCALE GENOMIC DNA]</scope>
    <source>
        <strain>ATCC 700860 / DSM 12428 / JCM 9974 / NBRC 100139 / OT-3</strain>
    </source>
</reference>
<reference key="2">
    <citation type="journal article" date="2003" name="Biochem. Biophys. Res. Commun.">
        <title>Reconstitution of archaeal ribonuclease P from RNA and four protein components.</title>
        <authorList>
            <person name="Kouzuma Y."/>
            <person name="Mizoguchi M."/>
            <person name="Takagi H."/>
            <person name="Fukuhara H."/>
            <person name="Tsukamoto M."/>
            <person name="Numata T."/>
            <person name="Kimura M."/>
        </authorList>
    </citation>
    <scope>FUNCTION</scope>
    <scope>BIOPHYSICOCHEMICAL PROPERTIES</scope>
    <scope>SUBUNIT</scope>
    <source>
        <strain>ATCC 700860 / DSM 12428 / JCM 9974 / NBRC 100139 / OT-3</strain>
    </source>
</reference>
<reference key="3">
    <citation type="journal article" date="2006" name="Biochem. Biophys. Res. Commun.">
        <title>A fifth protein subunit Ph1496p elevates the optimum temperature for the ribonuclease P activity from Pyrococcus horikoshii OT3.</title>
        <authorList>
            <person name="Fukuhara H."/>
            <person name="Kifusa M."/>
            <person name="Watanabe M."/>
            <person name="Terada A."/>
            <person name="Honda T."/>
            <person name="Numata T."/>
            <person name="Kakuta Y."/>
            <person name="Kimura M."/>
        </authorList>
    </citation>
    <scope>FUNCTION</scope>
    <scope>BIOPHYSICOCHEMICAL PROPERTIES</scope>
    <scope>SUBUNIT</scope>
    <source>
        <strain>ATCC 700860 / DSM 12428 / JCM 9974 / NBRC 100139 / OT-3</strain>
    </source>
</reference>
<reference key="4">
    <citation type="journal article" date="2006" name="J. Biochem.">
        <title>Characterization of the archaeal ribonuclease P proteins from Pyrococcus horikoshii OT3.</title>
        <authorList>
            <person name="Terada A."/>
            <person name="Honda T."/>
            <person name="Fukuhara H."/>
            <person name="Hada K."/>
            <person name="Kimura M."/>
        </authorList>
    </citation>
    <scope>FUNCTION</scope>
    <scope>SUBUNIT</scope>
    <source>
        <strain>ATCC 700860 / DSM 12428 / JCM 9974 / NBRC 100139 / OT-3</strain>
    </source>
</reference>
<reference key="5">
    <citation type="journal article" date="2006" name="J. Mol. Biol.">
        <title>Crystal structure of protein Ph1481p in complex with protein Ph1877p of archaeal RNase P from Pyrococcus horikoshii OT3: implication of dimer formation of the holoenzyme.</title>
        <authorList>
            <person name="Kawano S."/>
            <person name="Nakashima T."/>
            <person name="Kakuta Y."/>
            <person name="Tanaka I."/>
            <person name="Kimura M."/>
        </authorList>
    </citation>
    <scope>X-RAY CRYSTALLOGRAPHY (2.0 ANGSTROMS) IN COMPLEX WITH RNP3</scope>
    <scope>SUBUNIT</scope>
    <scope>MUTAGENESIS OF 43-LEU--GLU-48 AND CYS-72</scope>
    <source>
        <strain>ATCC 700860 / DSM 12428 / JCM 9974 / NBRC 100139 / OT-3</strain>
    </source>
</reference>
<dbReference type="EC" id="3.1.26.5" evidence="1"/>
<dbReference type="EMBL" id="BA000001">
    <property type="protein sequence ID" value="BAA30588.1"/>
    <property type="molecule type" value="Genomic_DNA"/>
</dbReference>
<dbReference type="PIR" id="D71023">
    <property type="entry name" value="D71023"/>
</dbReference>
<dbReference type="RefSeq" id="WP_010885560.1">
    <property type="nucleotide sequence ID" value="NC_000961.1"/>
</dbReference>
<dbReference type="PDB" id="2CZV">
    <property type="method" value="X-ray"/>
    <property type="resolution" value="2.00 A"/>
    <property type="chains" value="C/D=1-120"/>
</dbReference>
<dbReference type="PDBsum" id="2CZV"/>
<dbReference type="SMR" id="O59150"/>
<dbReference type="IntAct" id="O59150">
    <property type="interactions" value="2"/>
</dbReference>
<dbReference type="STRING" id="70601.gene:9378459"/>
<dbReference type="EnsemblBacteria" id="BAA30588">
    <property type="protein sequence ID" value="BAA30588"/>
    <property type="gene ID" value="BAA30588"/>
</dbReference>
<dbReference type="GeneID" id="1443798"/>
<dbReference type="KEGG" id="pho:PH1481"/>
<dbReference type="eggNOG" id="arCOG01365">
    <property type="taxonomic scope" value="Archaea"/>
</dbReference>
<dbReference type="OrthoDB" id="19261at2157"/>
<dbReference type="BRENDA" id="3.1.26.5">
    <property type="organism ID" value="5244"/>
</dbReference>
<dbReference type="EvolutionaryTrace" id="O59150"/>
<dbReference type="Proteomes" id="UP000000752">
    <property type="component" value="Chromosome"/>
</dbReference>
<dbReference type="GO" id="GO:0005737">
    <property type="term" value="C:cytoplasm"/>
    <property type="evidence" value="ECO:0007669"/>
    <property type="project" value="UniProtKB-SubCell"/>
</dbReference>
<dbReference type="GO" id="GO:0030677">
    <property type="term" value="C:ribonuclease P complex"/>
    <property type="evidence" value="ECO:0000314"/>
    <property type="project" value="UniProtKB"/>
</dbReference>
<dbReference type="GO" id="GO:0004526">
    <property type="term" value="F:ribonuclease P activity"/>
    <property type="evidence" value="ECO:0000314"/>
    <property type="project" value="UniProtKB"/>
</dbReference>
<dbReference type="GO" id="GO:0001682">
    <property type="term" value="P:tRNA 5'-leader removal"/>
    <property type="evidence" value="ECO:0000314"/>
    <property type="project" value="UniProtKB"/>
</dbReference>
<dbReference type="FunFam" id="3.30.70.3250:FF:000007">
    <property type="entry name" value="Ribonuclease P protein component 2"/>
    <property type="match status" value="1"/>
</dbReference>
<dbReference type="Gene3D" id="3.30.70.3250">
    <property type="entry name" value="Ribonuclease P, Pop5 subunit"/>
    <property type="match status" value="1"/>
</dbReference>
<dbReference type="HAMAP" id="MF_00755">
    <property type="entry name" value="RNase_P_2"/>
    <property type="match status" value="1"/>
</dbReference>
<dbReference type="InterPro" id="IPR002759">
    <property type="entry name" value="Pop5/Rpp14/Rnp2-like"/>
</dbReference>
<dbReference type="InterPro" id="IPR038085">
    <property type="entry name" value="Rnp2-like_sf"/>
</dbReference>
<dbReference type="InterPro" id="IPR016434">
    <property type="entry name" value="Rnp2_archaea"/>
</dbReference>
<dbReference type="NCBIfam" id="NF002986">
    <property type="entry name" value="PRK03717.1"/>
    <property type="match status" value="1"/>
</dbReference>
<dbReference type="PANTHER" id="PTHR15441">
    <property type="entry name" value="RIBONUCLEASE P PROTEIN SUBUNIT P14"/>
    <property type="match status" value="1"/>
</dbReference>
<dbReference type="PANTHER" id="PTHR15441:SF2">
    <property type="entry name" value="RIBONUCLEASE P_MRP PROTEIN SUBUNIT POP5"/>
    <property type="match status" value="1"/>
</dbReference>
<dbReference type="Pfam" id="PF01900">
    <property type="entry name" value="RNase_P_Rpp14"/>
    <property type="match status" value="1"/>
</dbReference>
<dbReference type="PIRSF" id="PIRSF004952">
    <property type="entry name" value="RNase_P_2"/>
    <property type="match status" value="1"/>
</dbReference>
<dbReference type="SUPFAM" id="SSF160350">
    <property type="entry name" value="Rnp2-like"/>
    <property type="match status" value="1"/>
</dbReference>
<gene>
    <name evidence="1" type="primary">rnp2</name>
    <name type="ordered locus">PH1481</name>
</gene>
<feature type="chain" id="PRO_0000140027" description="Ribonuclease P protein component 2">
    <location>
        <begin position="1"/>
        <end position="120"/>
    </location>
</feature>
<feature type="mutagenesis site" description="Forms heterodimer with Rnp3, but not heterotetramer. Does not reconstitute RNase P activity." evidence="3">
    <location>
        <begin position="43"/>
        <end position="48"/>
    </location>
</feature>
<feature type="mutagenesis site" description="Fully reconstitutes RNase P activity." evidence="3">
    <original>C</original>
    <variation>S</variation>
    <location>
        <position position="72"/>
    </location>
</feature>
<feature type="turn" evidence="6">
    <location>
        <begin position="10"/>
        <end position="12"/>
    </location>
</feature>
<feature type="strand" evidence="6">
    <location>
        <begin position="16"/>
        <end position="24"/>
    </location>
</feature>
<feature type="helix" evidence="6">
    <location>
        <begin position="31"/>
        <end position="54"/>
    </location>
</feature>
<feature type="strand" evidence="6">
    <location>
        <begin position="57"/>
        <end position="62"/>
    </location>
</feature>
<feature type="turn" evidence="6">
    <location>
        <begin position="63"/>
        <end position="66"/>
    </location>
</feature>
<feature type="strand" evidence="6">
    <location>
        <begin position="67"/>
        <end position="73"/>
    </location>
</feature>
<feature type="helix" evidence="6">
    <location>
        <begin position="74"/>
        <end position="76"/>
    </location>
</feature>
<feature type="helix" evidence="6">
    <location>
        <begin position="77"/>
        <end position="85"/>
    </location>
</feature>
<feature type="strand" evidence="6">
    <location>
        <begin position="96"/>
        <end position="105"/>
    </location>
</feature>
<feature type="helix" evidence="6">
    <location>
        <begin position="106"/>
        <end position="113"/>
    </location>
</feature>
<feature type="helix" evidence="6">
    <location>
        <begin position="115"/>
        <end position="117"/>
    </location>
</feature>
<comment type="function">
    <text evidence="1 2 4 5">Part of ribonuclease P, a protein complex that generates mature tRNA molecules by cleaving their 5'-ends.</text>
</comment>
<comment type="catalytic activity">
    <reaction evidence="1">
        <text>Endonucleolytic cleavage of RNA, removing 5'-extranucleotides from tRNA precursor.</text>
        <dbReference type="EC" id="3.1.26.5"/>
    </reaction>
</comment>
<comment type="biophysicochemical properties">
    <temperatureDependence>
        <text evidence="2 4">Optimum temperature is 70 degrees Celsius.</text>
    </temperatureDependence>
</comment>
<comment type="subunit">
    <text evidence="2 3 4 5">Homodimer in solution. Component of RNase P which consists of a catalytic RNA component and at least 5 protein subunits. Forms a heterotetrameric subcomplex with Rnp3. Reconstituted enzyme missing individual protein subunits is suboptimally active, showing each subunit contributes to optimization of activity.</text>
</comment>
<comment type="interaction">
    <interactant intactId="EBI-2603177">
        <id>O59150</id>
    </interactant>
    <interactant intactId="EBI-2603192">
        <id>O59543</id>
        <label>rnp3</label>
    </interactant>
    <organismsDiffer>false</organismsDiffer>
    <experiments>2</experiments>
</comment>
<comment type="interaction">
    <interactant intactId="EBI-2603177">
        <id>O59150</id>
    </interactant>
    <interactant intactId="EBI-2641275">
        <id>O59248</id>
        <label>rnp4</label>
    </interactant>
    <organismsDiffer>false</organismsDiffer>
    <experiments>3</experiments>
</comment>
<comment type="subcellular location">
    <subcellularLocation>
        <location evidence="1">Cytoplasm</location>
    </subcellularLocation>
</comment>
<comment type="similarity">
    <text evidence="1">Belongs to the eukaryotic/archaeal RNase P protein component 2 family.</text>
</comment>
<organism>
    <name type="scientific">Pyrococcus horikoshii (strain ATCC 700860 / DSM 12428 / JCM 9974 / NBRC 100139 / OT-3)</name>
    <dbReference type="NCBI Taxonomy" id="70601"/>
    <lineage>
        <taxon>Archaea</taxon>
        <taxon>Methanobacteriati</taxon>
        <taxon>Methanobacteriota</taxon>
        <taxon>Thermococci</taxon>
        <taxon>Thermococcales</taxon>
        <taxon>Thermococcaceae</taxon>
        <taxon>Pyrococcus</taxon>
    </lineage>
</organism>
<proteinExistence type="evidence at protein level"/>
<keyword id="KW-0002">3D-structure</keyword>
<keyword id="KW-0963">Cytoplasm</keyword>
<keyword id="KW-0255">Endonuclease</keyword>
<keyword id="KW-0378">Hydrolase</keyword>
<keyword id="KW-0540">Nuclease</keyword>
<keyword id="KW-0819">tRNA processing</keyword>
<evidence type="ECO:0000255" key="1">
    <source>
        <dbReference type="HAMAP-Rule" id="MF_00755"/>
    </source>
</evidence>
<evidence type="ECO:0000269" key="2">
    <source>
    </source>
</evidence>
<evidence type="ECO:0000269" key="3">
    <source>
    </source>
</evidence>
<evidence type="ECO:0000269" key="4">
    <source>
    </source>
</evidence>
<evidence type="ECO:0000269" key="5">
    <source>
    </source>
</evidence>
<evidence type="ECO:0007829" key="6">
    <source>
        <dbReference type="PDB" id="2CZV"/>
    </source>
</evidence>
<sequence length="120" mass="14044">MMRKLKTLPPTLRDKNRYIAFEIISDGDFTKDEVKELIWKSSLEVLGETGTAIVKPWLIKFDPNTKTGIVRCDREYVEYLRFALMLVSEFNGKRLIIRTLGVSGTIKRLKRKFLAKYGWK</sequence>
<accession>O59150</accession>
<protein>
    <recommendedName>
        <fullName evidence="1">Ribonuclease P protein component 2</fullName>
        <shortName evidence="1">RNase P component 2</shortName>
        <ecNumber evidence="1">3.1.26.5</ecNumber>
    </recommendedName>
    <alternativeName>
        <fullName evidence="1">Pop5</fullName>
    </alternativeName>
</protein>
<name>RNP2_PYRHO</name>